<proteinExistence type="inferred from homology"/>
<evidence type="ECO:0000255" key="1">
    <source>
        <dbReference type="HAMAP-Rule" id="MF_00719"/>
    </source>
</evidence>
<protein>
    <recommendedName>
        <fullName evidence="1">Adenosylcobinamide-GDP ribazoletransferase</fullName>
        <ecNumber evidence="1">2.7.8.26</ecNumber>
    </recommendedName>
    <alternativeName>
        <fullName evidence="1">Cobalamin synthase</fullName>
    </alternativeName>
    <alternativeName>
        <fullName evidence="1">Cobalamin-5'-phosphate synthase</fullName>
    </alternativeName>
</protein>
<name>COBS_LACP7</name>
<accession>A9KMP0</accession>
<keyword id="KW-1003">Cell membrane</keyword>
<keyword id="KW-0169">Cobalamin biosynthesis</keyword>
<keyword id="KW-0460">Magnesium</keyword>
<keyword id="KW-0472">Membrane</keyword>
<keyword id="KW-1185">Reference proteome</keyword>
<keyword id="KW-0808">Transferase</keyword>
<keyword id="KW-0812">Transmembrane</keyword>
<keyword id="KW-1133">Transmembrane helix</keyword>
<gene>
    <name evidence="1" type="primary">cobS</name>
    <name type="ordered locus">Cphy_1107</name>
</gene>
<organism>
    <name type="scientific">Lachnoclostridium phytofermentans (strain ATCC 700394 / DSM 18823 / ISDg)</name>
    <name type="common">Clostridium phytofermentans</name>
    <dbReference type="NCBI Taxonomy" id="357809"/>
    <lineage>
        <taxon>Bacteria</taxon>
        <taxon>Bacillati</taxon>
        <taxon>Bacillota</taxon>
        <taxon>Clostridia</taxon>
        <taxon>Lachnospirales</taxon>
        <taxon>Lachnospiraceae</taxon>
    </lineage>
</organism>
<comment type="function">
    <text evidence="1">Joins adenosylcobinamide-GDP and alpha-ribazole to generate adenosylcobalamin (Ado-cobalamin). Also synthesizes adenosylcobalamin 5'-phosphate from adenosylcobinamide-GDP and alpha-ribazole 5'-phosphate.</text>
</comment>
<comment type="catalytic activity">
    <reaction evidence="1">
        <text>alpha-ribazole + adenosylcob(III)inamide-GDP = adenosylcob(III)alamin + GMP + H(+)</text>
        <dbReference type="Rhea" id="RHEA:16049"/>
        <dbReference type="ChEBI" id="CHEBI:10329"/>
        <dbReference type="ChEBI" id="CHEBI:15378"/>
        <dbReference type="ChEBI" id="CHEBI:18408"/>
        <dbReference type="ChEBI" id="CHEBI:58115"/>
        <dbReference type="ChEBI" id="CHEBI:60487"/>
        <dbReference type="EC" id="2.7.8.26"/>
    </reaction>
</comment>
<comment type="catalytic activity">
    <reaction evidence="1">
        <text>alpha-ribazole 5'-phosphate + adenosylcob(III)inamide-GDP = adenosylcob(III)alamin 5'-phosphate + GMP + H(+)</text>
        <dbReference type="Rhea" id="RHEA:23560"/>
        <dbReference type="ChEBI" id="CHEBI:15378"/>
        <dbReference type="ChEBI" id="CHEBI:57918"/>
        <dbReference type="ChEBI" id="CHEBI:58115"/>
        <dbReference type="ChEBI" id="CHEBI:60487"/>
        <dbReference type="ChEBI" id="CHEBI:60493"/>
        <dbReference type="EC" id="2.7.8.26"/>
    </reaction>
</comment>
<comment type="cofactor">
    <cofactor evidence="1">
        <name>Mg(2+)</name>
        <dbReference type="ChEBI" id="CHEBI:18420"/>
    </cofactor>
</comment>
<comment type="pathway">
    <text evidence="1">Cofactor biosynthesis; adenosylcobalamin biosynthesis; adenosylcobalamin from cob(II)yrinate a,c-diamide: step 7/7.</text>
</comment>
<comment type="subcellular location">
    <subcellularLocation>
        <location evidence="1">Cell membrane</location>
        <topology evidence="1">Multi-pass membrane protein</topology>
    </subcellularLocation>
</comment>
<comment type="similarity">
    <text evidence="1">Belongs to the CobS family.</text>
</comment>
<sequence length="261" mass="28847">MKWLNSLWIAFSMYSKIRVPMKEWEESSMRYAICFFPLIGAVIGGVFFLTFQIGHLLKLGDILIAALLTSIPILISGGIHMDGYCDTMDAISSYQSKERRLEILKDPHSGAFAIIRSGVYFLLYFGMVSVLTLKSSIIIAIFFVVSRALSGLAVVQFKTAKSNGLVATFQQAAHKRKVTISMVIYLVITVIGMLLVSPILTVVGMLTALLCFIRYKKLAYQLFGGTTGDLAGYFLVRCELMAGLAVVIAEGVIIYGTGHWW</sequence>
<reference key="1">
    <citation type="submission" date="2007-11" db="EMBL/GenBank/DDBJ databases">
        <title>Complete genome sequence of Clostridium phytofermentans ISDg.</title>
        <authorList>
            <person name="Leschine S.B."/>
            <person name="Warnick T.A."/>
            <person name="Blanchard J.L."/>
            <person name="Schnell D.J."/>
            <person name="Petit E.L."/>
            <person name="LaTouf W.G."/>
            <person name="Copeland A."/>
            <person name="Lucas S."/>
            <person name="Lapidus A."/>
            <person name="Barry K."/>
            <person name="Glavina del Rio T."/>
            <person name="Dalin E."/>
            <person name="Tice H."/>
            <person name="Pitluck S."/>
            <person name="Kiss H."/>
            <person name="Brettin T."/>
            <person name="Bruce D."/>
            <person name="Detter J.C."/>
            <person name="Han C."/>
            <person name="Kuske C."/>
            <person name="Schmutz J."/>
            <person name="Larimer F."/>
            <person name="Land M."/>
            <person name="Hauser L."/>
            <person name="Kyrpides N."/>
            <person name="Kim E.A."/>
            <person name="Richardson P."/>
        </authorList>
    </citation>
    <scope>NUCLEOTIDE SEQUENCE [LARGE SCALE GENOMIC DNA]</scope>
    <source>
        <strain>ATCC 700394 / DSM 18823 / ISDg</strain>
    </source>
</reference>
<dbReference type="EC" id="2.7.8.26" evidence="1"/>
<dbReference type="EMBL" id="CP000885">
    <property type="protein sequence ID" value="ABX41485.1"/>
    <property type="molecule type" value="Genomic_DNA"/>
</dbReference>
<dbReference type="RefSeq" id="WP_012199131.1">
    <property type="nucleotide sequence ID" value="NC_010001.1"/>
</dbReference>
<dbReference type="STRING" id="357809.Cphy_1107"/>
<dbReference type="KEGG" id="cpy:Cphy_1107"/>
<dbReference type="eggNOG" id="COG0368">
    <property type="taxonomic scope" value="Bacteria"/>
</dbReference>
<dbReference type="HOGENOM" id="CLU_057426_1_2_9"/>
<dbReference type="OrthoDB" id="9794626at2"/>
<dbReference type="UniPathway" id="UPA00148">
    <property type="reaction ID" value="UER00238"/>
</dbReference>
<dbReference type="Proteomes" id="UP000000370">
    <property type="component" value="Chromosome"/>
</dbReference>
<dbReference type="GO" id="GO:0005886">
    <property type="term" value="C:plasma membrane"/>
    <property type="evidence" value="ECO:0007669"/>
    <property type="project" value="UniProtKB-SubCell"/>
</dbReference>
<dbReference type="GO" id="GO:0051073">
    <property type="term" value="F:adenosylcobinamide-GDP ribazoletransferase activity"/>
    <property type="evidence" value="ECO:0007669"/>
    <property type="project" value="UniProtKB-UniRule"/>
</dbReference>
<dbReference type="GO" id="GO:0008818">
    <property type="term" value="F:cobalamin 5'-phosphate synthase activity"/>
    <property type="evidence" value="ECO:0007669"/>
    <property type="project" value="UniProtKB-UniRule"/>
</dbReference>
<dbReference type="GO" id="GO:0009236">
    <property type="term" value="P:cobalamin biosynthetic process"/>
    <property type="evidence" value="ECO:0007669"/>
    <property type="project" value="UniProtKB-UniRule"/>
</dbReference>
<dbReference type="HAMAP" id="MF_00719">
    <property type="entry name" value="CobS"/>
    <property type="match status" value="1"/>
</dbReference>
<dbReference type="InterPro" id="IPR003805">
    <property type="entry name" value="CobS"/>
</dbReference>
<dbReference type="PANTHER" id="PTHR34148">
    <property type="entry name" value="ADENOSYLCOBINAMIDE-GDP RIBAZOLETRANSFERASE"/>
    <property type="match status" value="1"/>
</dbReference>
<dbReference type="PANTHER" id="PTHR34148:SF1">
    <property type="entry name" value="ADENOSYLCOBINAMIDE-GDP RIBAZOLETRANSFERASE"/>
    <property type="match status" value="1"/>
</dbReference>
<dbReference type="Pfam" id="PF02654">
    <property type="entry name" value="CobS"/>
    <property type="match status" value="1"/>
</dbReference>
<feature type="chain" id="PRO_1000132570" description="Adenosylcobinamide-GDP ribazoletransferase">
    <location>
        <begin position="1"/>
        <end position="261"/>
    </location>
</feature>
<feature type="transmembrane region" description="Helical" evidence="1">
    <location>
        <begin position="31"/>
        <end position="51"/>
    </location>
</feature>
<feature type="transmembrane region" description="Helical" evidence="1">
    <location>
        <begin position="59"/>
        <end position="79"/>
    </location>
</feature>
<feature type="transmembrane region" description="Helical" evidence="1">
    <location>
        <begin position="125"/>
        <end position="145"/>
    </location>
</feature>
<feature type="transmembrane region" description="Helical" evidence="1">
    <location>
        <begin position="183"/>
        <end position="203"/>
    </location>
</feature>
<feature type="transmembrane region" description="Helical" evidence="1">
    <location>
        <begin position="240"/>
        <end position="260"/>
    </location>
</feature>